<organismHost>
    <name type="scientific">Apium graveolens</name>
    <name type="common">Celery</name>
    <dbReference type="NCBI Taxonomy" id="4045"/>
</organismHost>
<organismHost>
    <name type="scientific">Astragalus glycyphyllos</name>
    <name type="common">Wild liquorice</name>
    <dbReference type="NCBI Taxonomy" id="83862"/>
</organismHost>
<organismHost>
    <name type="scientific">Capsicum annuum</name>
    <name type="common">Capsicum pepper</name>
    <dbReference type="NCBI Taxonomy" id="4072"/>
</organismHost>
<organismHost>
    <name type="scientific">Caryopteris incana</name>
    <dbReference type="NCBI Taxonomy" id="41386"/>
</organismHost>
<organismHost>
    <name type="scientific">Cicer arietinum</name>
    <name type="common">Chickpea</name>
    <name type="synonym">Garbanzo</name>
    <dbReference type="NCBI Taxonomy" id="3827"/>
</organismHost>
<organismHost>
    <name type="scientific">Glycine max</name>
    <name type="common">Soybean</name>
    <name type="synonym">Glycine hispida</name>
    <dbReference type="NCBI Taxonomy" id="3847"/>
</organismHost>
<organismHost>
    <name type="scientific">Lablab purpureus</name>
    <name type="common">Hyacinth bean</name>
    <name type="synonym">Dolichos lablab</name>
    <dbReference type="NCBI Taxonomy" id="35936"/>
</organismHost>
<organismHost>
    <name type="scientific">Lactuca sativa</name>
    <name type="common">Garden lettuce</name>
    <dbReference type="NCBI Taxonomy" id="4236"/>
</organismHost>
<organismHost>
    <name type="scientific">Lens culinaris</name>
    <name type="common">Lentil</name>
    <name type="synonym">Cicer lens</name>
    <dbReference type="NCBI Taxonomy" id="3864"/>
</organismHost>
<organismHost>
    <name type="scientific">Lupinus</name>
    <dbReference type="NCBI Taxonomy" id="3869"/>
</organismHost>
<organismHost>
    <name type="scientific">Malva parviflora</name>
    <name type="common">Little mallow</name>
    <name type="synonym">Cheeseweed mallow</name>
    <dbReference type="NCBI Taxonomy" id="145753"/>
</organismHost>
<organismHost>
    <name type="scientific">Medicago sativa</name>
    <name type="common">Alfalfa</name>
    <dbReference type="NCBI Taxonomy" id="3879"/>
</organismHost>
<organismHost>
    <name type="scientific">Nicotiana tabacum</name>
    <name type="common">Common tobacco</name>
    <dbReference type="NCBI Taxonomy" id="4097"/>
</organismHost>
<organismHost>
    <name type="scientific">Phaseolus vulgaris</name>
    <name type="common">Kidney bean</name>
    <name type="synonym">French bean</name>
    <dbReference type="NCBI Taxonomy" id="3885"/>
</organismHost>
<organismHost>
    <name type="scientific">Philadelphus</name>
    <dbReference type="NCBI Taxonomy" id="23113"/>
</organismHost>
<organismHost>
    <name type="scientific">Pisum sativum</name>
    <name type="common">Garden pea</name>
    <name type="synonym">Lathyrus oleraceus</name>
    <dbReference type="NCBI Taxonomy" id="3888"/>
</organismHost>
<organismHost>
    <name type="scientific">Solanum lycopersicum</name>
    <name type="common">Tomato</name>
    <name type="synonym">Lycopersicon esculentum</name>
    <dbReference type="NCBI Taxonomy" id="4081"/>
</organismHost>
<organismHost>
    <name type="scientific">Solanum tuberosum</name>
    <name type="common">Potato</name>
    <dbReference type="NCBI Taxonomy" id="4113"/>
</organismHost>
<organismHost>
    <name type="scientific">Teramnus repens</name>
    <dbReference type="NCBI Taxonomy" id="157662"/>
</organismHost>
<organismHost>
    <name type="scientific">Trifolium incarnatum</name>
    <name type="common">Crimson clover</name>
    <dbReference type="NCBI Taxonomy" id="60916"/>
</organismHost>
<organismHost>
    <name type="scientific">Viburnum opulus</name>
    <name type="common">High-bush cranberry</name>
    <dbReference type="NCBI Taxonomy" id="85293"/>
</organismHost>
<organismHost>
    <name type="scientific">Vigna radiata var. radiata</name>
    <name type="common">Mung bean</name>
    <name type="synonym">Phaseolus aureus</name>
    <dbReference type="NCBI Taxonomy" id="3916"/>
</organismHost>
<organismHost>
    <name type="scientific">Vigna unguiculata</name>
    <name type="common">Cowpea</name>
    <dbReference type="NCBI Taxonomy" id="3917"/>
</organismHost>
<proteinExistence type="inferred from homology"/>
<protein>
    <recommendedName>
        <fullName>Movement protein</fullName>
        <shortName>MP</shortName>
    </recommendedName>
    <alternativeName>
        <fullName>Protein 3A</fullName>
    </alternativeName>
</protein>
<dbReference type="EMBL" id="X00819">
    <property type="protein sequence ID" value="CAA25392.1"/>
    <property type="molecule type" value="Genomic_RNA"/>
</dbReference>
<dbReference type="PIR" id="A04204">
    <property type="entry name" value="WMBV3S"/>
</dbReference>
<dbReference type="GO" id="GO:0044219">
    <property type="term" value="C:host cell plasmodesma"/>
    <property type="evidence" value="ECO:0007669"/>
    <property type="project" value="UniProtKB-SubCell"/>
</dbReference>
<dbReference type="GO" id="GO:0046740">
    <property type="term" value="P:transport of virus in host, cell to cell"/>
    <property type="evidence" value="ECO:0007669"/>
    <property type="project" value="UniProtKB-KW"/>
</dbReference>
<dbReference type="InterPro" id="IPR002538">
    <property type="entry name" value="Bromo_MP"/>
</dbReference>
<dbReference type="Pfam" id="PF01573">
    <property type="entry name" value="Bromo_MP"/>
    <property type="match status" value="1"/>
</dbReference>
<feature type="chain" id="PRO_0000083228" description="Movement protein">
    <location>
        <begin position="1"/>
        <end position="300"/>
    </location>
</feature>
<gene>
    <name type="ORF">ORF3a</name>
</gene>
<accession>P03596</accession>
<name>MVP_AMVST</name>
<evidence type="ECO:0000250" key="1"/>
<evidence type="ECO:0000305" key="2"/>
<keyword id="KW-1031">Host cell junction</keyword>
<keyword id="KW-0813">Transport</keyword>
<keyword id="KW-0916">Viral movement protein</keyword>
<comment type="function">
    <text evidence="1">Transports viral genome to neighboring plant cells directly through plasmosdesmata, without any budding. The movement protein allows efficient cell to cell propagation, by bypassing the host cell wall barrier. Acts by forming a tubular structure at the host plasmodesmata, enlarging it enough to allow free passage of virion capsids (By similarity).</text>
</comment>
<comment type="subcellular location">
    <subcellularLocation>
        <location evidence="1">Host cell junction</location>
        <location evidence="1">Host plasmodesma</location>
    </subcellularLocation>
    <text evidence="1">Assembles into long tubular structures at the surface of the infected protoplast.</text>
</comment>
<comment type="similarity">
    <text evidence="2">Belongs to the alfamovirus movement protein family.</text>
</comment>
<organism>
    <name type="scientific">Alfalfa mosaic virus (strain Strasbourg)</name>
    <dbReference type="NCBI Taxonomy" id="12324"/>
    <lineage>
        <taxon>Viruses</taxon>
        <taxon>Riboviria</taxon>
        <taxon>Orthornavirae</taxon>
        <taxon>Kitrinoviricota</taxon>
        <taxon>Alsuviricetes</taxon>
        <taxon>Martellivirales</taxon>
        <taxon>Bromoviridae</taxon>
        <taxon>Alfamovirus</taxon>
        <taxon>Alfalfa mosaic virus</taxon>
    </lineage>
</organism>
<reference key="1">
    <citation type="journal article" date="1984" name="Biochimie">
        <title>Complete nucleotide sequence of RNA 3 from alfalfa mosaic virus, strain S.</title>
        <authorList>
            <person name="Ravelonandro M."/>
            <person name="Pinck M."/>
            <person name="Pinck L."/>
        </authorList>
    </citation>
    <scope>NUCLEOTIDE SEQUENCE [GENOMIC RNA]</scope>
</reference>
<sequence length="300" mass="32479">MENTKTNASSSGMFSSSSFSVSYAEEMLLADEVSKINSMSILGPNQLKLCTQLVLSNGAAPVVLSLVSKEKKSISNRMLPKIGQRMYVHHSAIYLLYMPNILKSSSGSITLKLFNEATEELVDVDTDHDATQACIFAGRYPRSILAKDAAKGHDLKLVVHAVASTKANSAVGVLYPIWEDELSRKQILERGADFLKFPIAETEPVRDLLNAGKLTNFVLDRTRLGVGSKSDPSPVLLEPRAKITGKAKTFFIPEGPSVPNTTISGIAPSVRIDAGSPKGLGVPKGFTYESFIKDEILPDH</sequence>